<name>SSUE_PSEPK</name>
<accession>Q88R97</accession>
<reference key="1">
    <citation type="journal article" date="2002" name="Environ. Microbiol.">
        <title>Complete genome sequence and comparative analysis of the metabolically versatile Pseudomonas putida KT2440.</title>
        <authorList>
            <person name="Nelson K.E."/>
            <person name="Weinel C."/>
            <person name="Paulsen I.T."/>
            <person name="Dodson R.J."/>
            <person name="Hilbert H."/>
            <person name="Martins dos Santos V.A.P."/>
            <person name="Fouts D.E."/>
            <person name="Gill S.R."/>
            <person name="Pop M."/>
            <person name="Holmes M."/>
            <person name="Brinkac L.M."/>
            <person name="Beanan M.J."/>
            <person name="DeBoy R.T."/>
            <person name="Daugherty S.C."/>
            <person name="Kolonay J.F."/>
            <person name="Madupu R."/>
            <person name="Nelson W.C."/>
            <person name="White O."/>
            <person name="Peterson J.D."/>
            <person name="Khouri H.M."/>
            <person name="Hance I."/>
            <person name="Chris Lee P."/>
            <person name="Holtzapple E.K."/>
            <person name="Scanlan D."/>
            <person name="Tran K."/>
            <person name="Moazzez A."/>
            <person name="Utterback T.R."/>
            <person name="Rizzo M."/>
            <person name="Lee K."/>
            <person name="Kosack D."/>
            <person name="Moestl D."/>
            <person name="Wedler H."/>
            <person name="Lauber J."/>
            <person name="Stjepandic D."/>
            <person name="Hoheisel J."/>
            <person name="Straetz M."/>
            <person name="Heim S."/>
            <person name="Kiewitz C."/>
            <person name="Eisen J.A."/>
            <person name="Timmis K.N."/>
            <person name="Duesterhoeft A."/>
            <person name="Tuemmler B."/>
            <person name="Fraser C.M."/>
        </authorList>
    </citation>
    <scope>NUCLEOTIDE SEQUENCE [LARGE SCALE GENOMIC DNA]</scope>
    <source>
        <strain>ATCC 47054 / DSM 6125 / CFBP 8728 / NCIMB 11950 / KT2440</strain>
    </source>
</reference>
<gene>
    <name type="primary">ssuE</name>
    <name type="ordered locus">PP_0236</name>
</gene>
<proteinExistence type="inferred from homology"/>
<feature type="chain" id="PRO_0000160592" description="FMN reductase (NADPH)">
    <location>
        <begin position="1"/>
        <end position="197"/>
    </location>
</feature>
<evidence type="ECO:0000250" key="1"/>
<evidence type="ECO:0000305" key="2"/>
<dbReference type="EC" id="1.5.1.38"/>
<dbReference type="EMBL" id="AE015451">
    <property type="protein sequence ID" value="AAN65868.1"/>
    <property type="molecule type" value="Genomic_DNA"/>
</dbReference>
<dbReference type="RefSeq" id="NP_742404.1">
    <property type="nucleotide sequence ID" value="NC_002947.4"/>
</dbReference>
<dbReference type="RefSeq" id="WP_003255835.1">
    <property type="nucleotide sequence ID" value="NZ_CP169744.1"/>
</dbReference>
<dbReference type="SMR" id="Q88R97"/>
<dbReference type="STRING" id="160488.PP_0236"/>
<dbReference type="PaxDb" id="160488-PP_0236"/>
<dbReference type="GeneID" id="83677497"/>
<dbReference type="KEGG" id="ppu:PP_0236"/>
<dbReference type="PATRIC" id="fig|160488.4.peg.252"/>
<dbReference type="eggNOG" id="COG0431">
    <property type="taxonomic scope" value="Bacteria"/>
</dbReference>
<dbReference type="HOGENOM" id="CLU_055322_3_0_6"/>
<dbReference type="OrthoDB" id="1643408at2"/>
<dbReference type="PhylomeDB" id="Q88R97"/>
<dbReference type="BioCyc" id="PPUT160488:G1G01-258-MONOMER"/>
<dbReference type="Proteomes" id="UP000000556">
    <property type="component" value="Chromosome"/>
</dbReference>
<dbReference type="GO" id="GO:0052873">
    <property type="term" value="F:FMN reductase (NADPH) activity"/>
    <property type="evidence" value="ECO:0007669"/>
    <property type="project" value="UniProtKB-EC"/>
</dbReference>
<dbReference type="GO" id="GO:0008752">
    <property type="term" value="F:FMN reductase [NAD(P)H] activity"/>
    <property type="evidence" value="ECO:0007669"/>
    <property type="project" value="InterPro"/>
</dbReference>
<dbReference type="GO" id="GO:0016655">
    <property type="term" value="F:oxidoreductase activity, acting on NAD(P)H, quinone or similar compound as acceptor"/>
    <property type="evidence" value="ECO:0007669"/>
    <property type="project" value="UniProtKB-ARBA"/>
</dbReference>
<dbReference type="GO" id="GO:0046306">
    <property type="term" value="P:alkanesulfonate catabolic process"/>
    <property type="evidence" value="ECO:0007669"/>
    <property type="project" value="InterPro"/>
</dbReference>
<dbReference type="Gene3D" id="3.40.50.360">
    <property type="match status" value="1"/>
</dbReference>
<dbReference type="InterPro" id="IPR029039">
    <property type="entry name" value="Flavoprotein-like_sf"/>
</dbReference>
<dbReference type="InterPro" id="IPR005025">
    <property type="entry name" value="FMN_Rdtase-like_dom"/>
</dbReference>
<dbReference type="InterPro" id="IPR051814">
    <property type="entry name" value="NAD(P)H-dep_FMN_reductase"/>
</dbReference>
<dbReference type="InterPro" id="IPR020048">
    <property type="entry name" value="NADPH-dep_FMN_reduc_SsuE"/>
</dbReference>
<dbReference type="NCBIfam" id="TIGR03567">
    <property type="entry name" value="FMN_reduc_SsuE"/>
    <property type="match status" value="1"/>
</dbReference>
<dbReference type="NCBIfam" id="NF007859">
    <property type="entry name" value="PRK10569.1"/>
    <property type="match status" value="1"/>
</dbReference>
<dbReference type="PANTHER" id="PTHR43408">
    <property type="entry name" value="FMN REDUCTASE (NADPH)"/>
    <property type="match status" value="1"/>
</dbReference>
<dbReference type="PANTHER" id="PTHR43408:SF1">
    <property type="entry name" value="FMN REDUCTASE (NADPH)"/>
    <property type="match status" value="1"/>
</dbReference>
<dbReference type="Pfam" id="PF03358">
    <property type="entry name" value="FMN_red"/>
    <property type="match status" value="1"/>
</dbReference>
<dbReference type="SUPFAM" id="SSF52218">
    <property type="entry name" value="Flavoproteins"/>
    <property type="match status" value="1"/>
</dbReference>
<sequence length="197" mass="21571">MLVVSIGGSPSLRSRSGVLLERSRQWLQDRGVEVVTFQVRDFPAEDLLHARFDSPHVQHFQQLVAQADGLIVSTPVYKASFSGALKTLLDLLPERALAHKIVLPIATGGSIAHMLAVDYALKPVLSALKAQETLQGIFADDSQVAYAEGTKPAQLVQALEERLHDSLETFHVALARRPRPVAPGVLNERLISARWSI</sequence>
<organism>
    <name type="scientific">Pseudomonas putida (strain ATCC 47054 / DSM 6125 / CFBP 8728 / NCIMB 11950 / KT2440)</name>
    <dbReference type="NCBI Taxonomy" id="160488"/>
    <lineage>
        <taxon>Bacteria</taxon>
        <taxon>Pseudomonadati</taxon>
        <taxon>Pseudomonadota</taxon>
        <taxon>Gammaproteobacteria</taxon>
        <taxon>Pseudomonadales</taxon>
        <taxon>Pseudomonadaceae</taxon>
        <taxon>Pseudomonas</taxon>
    </lineage>
</organism>
<comment type="function">
    <text evidence="1">Probably forms a two-component reduced flavin mononucleotide-dependent monooxygenase by binding to SsuD. Required for growth on aliphatic sulfonates or methionine but not arylsulfonates (By similarity).</text>
</comment>
<comment type="catalytic activity">
    <reaction>
        <text>FMNH2 + NADP(+) = FMN + NADPH + 2 H(+)</text>
        <dbReference type="Rhea" id="RHEA:21624"/>
        <dbReference type="ChEBI" id="CHEBI:15378"/>
        <dbReference type="ChEBI" id="CHEBI:57618"/>
        <dbReference type="ChEBI" id="CHEBI:57783"/>
        <dbReference type="ChEBI" id="CHEBI:58210"/>
        <dbReference type="ChEBI" id="CHEBI:58349"/>
        <dbReference type="EC" id="1.5.1.38"/>
    </reaction>
</comment>
<comment type="similarity">
    <text evidence="2">Belongs to the SsuE family.</text>
</comment>
<keyword id="KW-0285">Flavoprotein</keyword>
<keyword id="KW-0288">FMN</keyword>
<keyword id="KW-0521">NADP</keyword>
<keyword id="KW-0560">Oxidoreductase</keyword>
<keyword id="KW-1185">Reference proteome</keyword>
<protein>
    <recommendedName>
        <fullName>FMN reductase (NADPH)</fullName>
        <ecNumber>1.5.1.38</ecNumber>
    </recommendedName>
    <alternativeName>
        <fullName>FMN reductase</fullName>
    </alternativeName>
</protein>